<protein>
    <recommendedName>
        <fullName evidence="1">ATP synthase subunit beta</fullName>
        <ecNumber evidence="1">7.1.2.2</ecNumber>
    </recommendedName>
    <alternativeName>
        <fullName evidence="1">ATP synthase F1 sector subunit beta</fullName>
    </alternativeName>
    <alternativeName>
        <fullName evidence="1">F-ATPase subunit beta</fullName>
    </alternativeName>
</protein>
<keyword id="KW-0066">ATP synthesis</keyword>
<keyword id="KW-0067">ATP-binding</keyword>
<keyword id="KW-1003">Cell membrane</keyword>
<keyword id="KW-0139">CF(1)</keyword>
<keyword id="KW-0375">Hydrogen ion transport</keyword>
<keyword id="KW-0406">Ion transport</keyword>
<keyword id="KW-0472">Membrane</keyword>
<keyword id="KW-0547">Nucleotide-binding</keyword>
<keyword id="KW-1278">Translocase</keyword>
<keyword id="KW-0813">Transport</keyword>
<organism>
    <name type="scientific">Streptococcus pyogenes serotype M3 (strain ATCC BAA-595 / MGAS315)</name>
    <dbReference type="NCBI Taxonomy" id="198466"/>
    <lineage>
        <taxon>Bacteria</taxon>
        <taxon>Bacillati</taxon>
        <taxon>Bacillota</taxon>
        <taxon>Bacilli</taxon>
        <taxon>Lactobacillales</taxon>
        <taxon>Streptococcaceae</taxon>
        <taxon>Streptococcus</taxon>
    </lineage>
</organism>
<proteinExistence type="inferred from homology"/>
<accession>P0DA04</accession>
<accession>Q79WQ5</accession>
<accession>Q8K826</accession>
<comment type="function">
    <text evidence="1">Produces ATP from ADP in the presence of a proton gradient across the membrane. The catalytic sites are hosted primarily by the beta subunits.</text>
</comment>
<comment type="catalytic activity">
    <reaction evidence="1">
        <text>ATP + H2O + 4 H(+)(in) = ADP + phosphate + 5 H(+)(out)</text>
        <dbReference type="Rhea" id="RHEA:57720"/>
        <dbReference type="ChEBI" id="CHEBI:15377"/>
        <dbReference type="ChEBI" id="CHEBI:15378"/>
        <dbReference type="ChEBI" id="CHEBI:30616"/>
        <dbReference type="ChEBI" id="CHEBI:43474"/>
        <dbReference type="ChEBI" id="CHEBI:456216"/>
        <dbReference type="EC" id="7.1.2.2"/>
    </reaction>
</comment>
<comment type="subunit">
    <text evidence="1">F-type ATPases have 2 components, CF(1) - the catalytic core - and CF(0) - the membrane proton channel. CF(1) has five subunits: alpha(3), beta(3), gamma(1), delta(1), epsilon(1). CF(0) has three main subunits: a(1), b(2) and c(9-12). The alpha and beta chains form an alternating ring which encloses part of the gamma chain. CF(1) is attached to CF(0) by a central stalk formed by the gamma and epsilon chains, while a peripheral stalk is formed by the delta and b chains.</text>
</comment>
<comment type="subcellular location">
    <subcellularLocation>
        <location evidence="1">Cell membrane</location>
        <topology evidence="1">Peripheral membrane protein</topology>
    </subcellularLocation>
</comment>
<comment type="similarity">
    <text evidence="1">Belongs to the ATPase alpha/beta chains family.</text>
</comment>
<gene>
    <name evidence="1" type="primary">atpD</name>
    <name type="ordered locus">SpyM3_0499</name>
</gene>
<reference key="1">
    <citation type="journal article" date="2002" name="Proc. Natl. Acad. Sci. U.S.A.">
        <title>Genome sequence of a serotype M3 strain of group A Streptococcus: phage-encoded toxins, the high-virulence phenotype, and clone emergence.</title>
        <authorList>
            <person name="Beres S.B."/>
            <person name="Sylva G.L."/>
            <person name="Barbian K.D."/>
            <person name="Lei B."/>
            <person name="Hoff J.S."/>
            <person name="Mammarella N.D."/>
            <person name="Liu M.-Y."/>
            <person name="Smoot J.C."/>
            <person name="Porcella S.F."/>
            <person name="Parkins L.D."/>
            <person name="Campbell D.S."/>
            <person name="Smith T.M."/>
            <person name="McCormick J.K."/>
            <person name="Leung D.Y.M."/>
            <person name="Schlievert P.M."/>
            <person name="Musser J.M."/>
        </authorList>
    </citation>
    <scope>NUCLEOTIDE SEQUENCE [LARGE SCALE GENOMIC DNA]</scope>
    <source>
        <strain>ATCC BAA-595 / MGAS315</strain>
    </source>
</reference>
<evidence type="ECO:0000255" key="1">
    <source>
        <dbReference type="HAMAP-Rule" id="MF_01347"/>
    </source>
</evidence>
<dbReference type="EC" id="7.1.2.2" evidence="1"/>
<dbReference type="EMBL" id="AE014074">
    <property type="protein sequence ID" value="AAM79106.1"/>
    <property type="molecule type" value="Genomic_DNA"/>
</dbReference>
<dbReference type="RefSeq" id="WP_002985235.1">
    <property type="nucleotide sequence ID" value="NC_004070.1"/>
</dbReference>
<dbReference type="SMR" id="P0DA04"/>
<dbReference type="GeneID" id="69901114"/>
<dbReference type="KEGG" id="spg:SpyM3_0499"/>
<dbReference type="HOGENOM" id="CLU_022398_0_2_9"/>
<dbReference type="Proteomes" id="UP000000564">
    <property type="component" value="Chromosome"/>
</dbReference>
<dbReference type="GO" id="GO:0005886">
    <property type="term" value="C:plasma membrane"/>
    <property type="evidence" value="ECO:0007669"/>
    <property type="project" value="UniProtKB-SubCell"/>
</dbReference>
<dbReference type="GO" id="GO:0045259">
    <property type="term" value="C:proton-transporting ATP synthase complex"/>
    <property type="evidence" value="ECO:0007669"/>
    <property type="project" value="UniProtKB-KW"/>
</dbReference>
<dbReference type="GO" id="GO:0005524">
    <property type="term" value="F:ATP binding"/>
    <property type="evidence" value="ECO:0007669"/>
    <property type="project" value="UniProtKB-UniRule"/>
</dbReference>
<dbReference type="GO" id="GO:0016887">
    <property type="term" value="F:ATP hydrolysis activity"/>
    <property type="evidence" value="ECO:0007669"/>
    <property type="project" value="InterPro"/>
</dbReference>
<dbReference type="GO" id="GO:0046933">
    <property type="term" value="F:proton-transporting ATP synthase activity, rotational mechanism"/>
    <property type="evidence" value="ECO:0007669"/>
    <property type="project" value="UniProtKB-UniRule"/>
</dbReference>
<dbReference type="CDD" id="cd18110">
    <property type="entry name" value="ATP-synt_F1_beta_C"/>
    <property type="match status" value="1"/>
</dbReference>
<dbReference type="CDD" id="cd18115">
    <property type="entry name" value="ATP-synt_F1_beta_N"/>
    <property type="match status" value="1"/>
</dbReference>
<dbReference type="CDD" id="cd01133">
    <property type="entry name" value="F1-ATPase_beta_CD"/>
    <property type="match status" value="1"/>
</dbReference>
<dbReference type="FunFam" id="1.10.1140.10:FF:000001">
    <property type="entry name" value="ATP synthase subunit beta"/>
    <property type="match status" value="1"/>
</dbReference>
<dbReference type="FunFam" id="2.40.10.170:FF:000005">
    <property type="entry name" value="ATP synthase subunit beta"/>
    <property type="match status" value="1"/>
</dbReference>
<dbReference type="FunFam" id="3.40.50.300:FF:000004">
    <property type="entry name" value="ATP synthase subunit beta"/>
    <property type="match status" value="1"/>
</dbReference>
<dbReference type="Gene3D" id="2.40.10.170">
    <property type="match status" value="1"/>
</dbReference>
<dbReference type="Gene3D" id="1.10.1140.10">
    <property type="entry name" value="Bovine Mitochondrial F1-atpase, Atp Synthase Beta Chain, Chain D, domain 3"/>
    <property type="match status" value="1"/>
</dbReference>
<dbReference type="Gene3D" id="3.40.50.300">
    <property type="entry name" value="P-loop containing nucleotide triphosphate hydrolases"/>
    <property type="match status" value="1"/>
</dbReference>
<dbReference type="HAMAP" id="MF_01347">
    <property type="entry name" value="ATP_synth_beta_bact"/>
    <property type="match status" value="1"/>
</dbReference>
<dbReference type="InterPro" id="IPR003593">
    <property type="entry name" value="AAA+_ATPase"/>
</dbReference>
<dbReference type="InterPro" id="IPR055190">
    <property type="entry name" value="ATP-synt_VA_C"/>
</dbReference>
<dbReference type="InterPro" id="IPR005722">
    <property type="entry name" value="ATP_synth_F1_bsu"/>
</dbReference>
<dbReference type="InterPro" id="IPR020003">
    <property type="entry name" value="ATPase_a/bsu_AS"/>
</dbReference>
<dbReference type="InterPro" id="IPR050053">
    <property type="entry name" value="ATPase_alpha/beta_chains"/>
</dbReference>
<dbReference type="InterPro" id="IPR004100">
    <property type="entry name" value="ATPase_F1/V1/A1_a/bsu_N"/>
</dbReference>
<dbReference type="InterPro" id="IPR036121">
    <property type="entry name" value="ATPase_F1/V1/A1_a/bsu_N_sf"/>
</dbReference>
<dbReference type="InterPro" id="IPR000194">
    <property type="entry name" value="ATPase_F1/V1/A1_a/bsu_nucl-bd"/>
</dbReference>
<dbReference type="InterPro" id="IPR024034">
    <property type="entry name" value="ATPase_F1/V1_b/a_C"/>
</dbReference>
<dbReference type="InterPro" id="IPR027417">
    <property type="entry name" value="P-loop_NTPase"/>
</dbReference>
<dbReference type="NCBIfam" id="TIGR01039">
    <property type="entry name" value="atpD"/>
    <property type="match status" value="1"/>
</dbReference>
<dbReference type="PANTHER" id="PTHR15184">
    <property type="entry name" value="ATP SYNTHASE"/>
    <property type="match status" value="1"/>
</dbReference>
<dbReference type="PANTHER" id="PTHR15184:SF71">
    <property type="entry name" value="ATP SYNTHASE SUBUNIT BETA, MITOCHONDRIAL"/>
    <property type="match status" value="1"/>
</dbReference>
<dbReference type="Pfam" id="PF00006">
    <property type="entry name" value="ATP-synt_ab"/>
    <property type="match status" value="1"/>
</dbReference>
<dbReference type="Pfam" id="PF02874">
    <property type="entry name" value="ATP-synt_ab_N"/>
    <property type="match status" value="1"/>
</dbReference>
<dbReference type="Pfam" id="PF22919">
    <property type="entry name" value="ATP-synt_VA_C"/>
    <property type="match status" value="1"/>
</dbReference>
<dbReference type="SMART" id="SM00382">
    <property type="entry name" value="AAA"/>
    <property type="match status" value="1"/>
</dbReference>
<dbReference type="SUPFAM" id="SSF47917">
    <property type="entry name" value="C-terminal domain of alpha and beta subunits of F1 ATP synthase"/>
    <property type="match status" value="1"/>
</dbReference>
<dbReference type="SUPFAM" id="SSF50615">
    <property type="entry name" value="N-terminal domain of alpha and beta subunits of F1 ATP synthase"/>
    <property type="match status" value="1"/>
</dbReference>
<dbReference type="SUPFAM" id="SSF52540">
    <property type="entry name" value="P-loop containing nucleoside triphosphate hydrolases"/>
    <property type="match status" value="1"/>
</dbReference>
<dbReference type="PROSITE" id="PS00152">
    <property type="entry name" value="ATPASE_ALPHA_BETA"/>
    <property type="match status" value="1"/>
</dbReference>
<name>ATPB_STRP3</name>
<sequence>MSSGKIAQVVGPVVDVMFASGDKLPEINNALIVYKDSDKKQKIVLEVALELGDGMVRTIAMESTDGLTRGLEVLDTGRAISVPVGKETLGRVFNVLGETIDLEEPFAEDVDRQPIHKKAPSFDELSTSSEILETGIKVIDLLAPYLKGGKVGLFGGAGVGKTVLIQELIHNIAQEHGGISVFTGVGERTREGNDLYWEMKESGVIEKTAMVFGQMNEPPGARMRVALTGLTIAEYFRDVEGQDVLLFIDNIFRFTQAGSEVSALLGRMPSAVGYQPTLATEMGQLQERITSTQKGSVTSIQAIYVPADDYTDPAPATAFAHLDSTTNLERKLTQMGIYPAVDPLASSSRALSPEIVGEEHYAVATEVQRVLQRYRELQDIIAILGMDELSDEEKTLVGRARRIQFFLSQNFNVAEQFTGLPGSYVPVAETVRGFKEILEGKYDDLPEDAFRSVGPIEDVIKKAEKMGF</sequence>
<feature type="chain" id="PRO_0000254397" description="ATP synthase subunit beta">
    <location>
        <begin position="1"/>
        <end position="468"/>
    </location>
</feature>
<feature type="binding site" evidence="1">
    <location>
        <begin position="155"/>
        <end position="162"/>
    </location>
    <ligand>
        <name>ATP</name>
        <dbReference type="ChEBI" id="CHEBI:30616"/>
    </ligand>
</feature>